<proteinExistence type="evidence at protein level"/>
<sequence>MTSRQGRQAIAATAAMGVAVALALPTAAFAQSATQGKETATTTSSGTTYYVSSAHGDDANAGTSENAPWKSLTKVNDIASDLGPGDSVLLEYGSEFNDQYLHIKDTAGNADAPITISAYGDADEGKPVIASNGVKGSQWEQDYRANVGNHKNKGTVSTTLLLKDVSYITVSNLEITNDDADVYDPIDTWKWTDTPDSDGTKLDRSASRMDRTGVAGIAENGATMSNVTLDNLYIHDVDGNIYNKHMANGGIYFMAHYPMENTSAETDVWLREHVSRFDHVTIRNSTVKDVDRWGIAVGYTAYLNYIDANYGDGSIDDALIAKYGSTNVRIENNYVKGAGGDAITLMYCDRPVIEHNVGDSVSKHINTQDYTQPGSYGGRVAAGIWPWRCKDPVFQYNEMYNNLNAEHGNGDGQAWDADYGDGTLYQYNYSYGNSFASLMICNWYAVNTTFRYNISQNDRQGVFDLPSNGPGNHIYNNTVYVDADSQVLTKRSNSQSLFENNIFINATNTKKTETWNRGSQNGGQTYDNNMYVNYANKPTSDANAIEADDVSAVLAGAGSAPTSALKSGAEHARTGEKAAFDGYRPVAGSKAINAGKVVSDLNDYAVENDFLGNAVKGRPDLGAVESDVVSVTMASSKYETGTETDSGTGDKTKVIHVTFTDKNPVTVKELLSNVSADKGVDKAVYRVADAKSGKSADARSAESEPNMLDRLLSLLPGSDRNAKDDETKLADSEPVRDGDILRFSAEGTDETDEYTIRQRITWDWVADYEQGVADFDWKAQRRTSAGGEWTTISAYDGSWPNTVYDQYYGVGVNGTLAELSGDRKQTHGLLIDKPGDGLPTAMAWKAPESGTVMLSLKTFADKIAEPYLRQNADNAGKKVTLSLMRNDETLCSADDLSVYQKSSEQFAQCLAEHGSIDVQEGDWIRIVADAETGVKAPSLHISPVITYEDKAPAAPKQNVRYDVSYAATDAVVGTQSAVAAAFTADGGEADAPDGVAFAFKDGGDEGEASPVIDASTGAVTFTPAAGQYGATVTRTVVVTYADGSSDETTVTFRVAQSHAQRLNVLYPTVRGDAGTDLKRTPKFTLKADGAAASVPEGTTFALGANAPAGASVDMANGTVTLNSGVGGTVTVPVTVTFADDGASVSSTARFEVTAPAALGSSELETATVDGVNVVYAPFSADSPMTVAQLLAKVTAEPSGADKGVYRDGVRLEAGAELAENDVLRFSAKGSTVSDDYVVKSKTTWDWVNDFQVRVQGPIWYGQRQTEADGVWSDIADFDATYPNWMYETYYGPGVDYANHSLPTDRSAIHGLISDSPASAGGSAMAWKAPKAGTVKVSIREDEPYLRQDGSNGKALTLRLMHDDKVVCFADLTVSKQRSEEFANCVADKGEIAVEAGDWIRVTATSASGMNKPSAHISPVIAYMAASTPGPEPVPVDKSTLKATVEEALGLAESDYTDESWAALVAARDAAQTVLDDDAATAEQVETAQNALRDAIDGLEKKPVDPDPNPKPDPNPDPDPTPDPDPDPGPDTKPGDGSGNGSGTGNGSGSGNGSTGSGSDGATTGGKLTATGADVAGAAAMVALTAAAGIGLAAAARRRR</sequence>
<feature type="signal peptide" description="Tat-type signal" evidence="2">
    <location>
        <begin position="1"/>
        <end position="30"/>
    </location>
</feature>
<feature type="chain" id="PRO_0000456635" description="Lacto-N-biosidase">
    <location>
        <begin position="31"/>
        <end position="1599"/>
    </location>
</feature>
<feature type="transmembrane region" description="Helical" evidence="1">
    <location>
        <begin position="1574"/>
        <end position="1594"/>
    </location>
</feature>
<feature type="repeat" description="PbH1 1" evidence="1">
    <location>
        <begin position="165"/>
        <end position="190"/>
    </location>
</feature>
<feature type="repeat" description="PbH1 2" evidence="1">
    <location>
        <begin position="224"/>
        <end position="255"/>
    </location>
</feature>
<feature type="repeat" description="PbH1 3" evidence="1">
    <location>
        <begin position="277"/>
        <end position="299"/>
    </location>
</feature>
<feature type="repeat" description="PbH1 4" evidence="1">
    <location>
        <begin position="325"/>
        <end position="347"/>
    </location>
</feature>
<feature type="repeat" description="PbH1 5" evidence="1">
    <location>
        <begin position="348"/>
        <end position="388"/>
    </location>
</feature>
<feature type="repeat" description="PbH1 6" evidence="1">
    <location>
        <begin position="389"/>
        <end position="437"/>
    </location>
</feature>
<feature type="repeat" description="PbH1 7" evidence="1">
    <location>
        <begin position="469"/>
        <end position="506"/>
    </location>
</feature>
<feature type="domain" description="FIVAR" evidence="1">
    <location>
        <begin position="1436"/>
        <end position="1498"/>
    </location>
</feature>
<feature type="region of interest" description="Disordered" evidence="3">
    <location>
        <begin position="1494"/>
        <end position="1568"/>
    </location>
</feature>
<feature type="compositionally biased region" description="Basic and acidic residues" evidence="3">
    <location>
        <begin position="1494"/>
        <end position="1509"/>
    </location>
</feature>
<feature type="compositionally biased region" description="Gly residues" evidence="3">
    <location>
        <begin position="1535"/>
        <end position="1558"/>
    </location>
</feature>
<feature type="compositionally biased region" description="Low complexity" evidence="3">
    <location>
        <begin position="1559"/>
        <end position="1568"/>
    </location>
</feature>
<feature type="active site" description="Proton donor/acceptor" evidence="10">
    <location>
        <position position="411"/>
    </location>
</feature>
<feature type="active site" description="Nucleophile" evidence="10">
    <location>
        <position position="418"/>
    </location>
</feature>
<feature type="binding site" evidence="5 14">
    <location>
        <position position="150"/>
    </location>
    <ligand>
        <name>beta-D-galactosyl-(1-&gt;3)-N-acetyl-D-glucosamine</name>
        <dbReference type="ChEBI" id="CHEBI:27707"/>
    </ligand>
</feature>
<feature type="binding site" evidence="13 14 15">
    <location>
        <position position="178"/>
    </location>
    <ligand>
        <name>Ca(2+)</name>
        <dbReference type="ChEBI" id="CHEBI:29108"/>
    </ligand>
</feature>
<feature type="binding site" evidence="13 14 15">
    <location>
        <position position="179"/>
    </location>
    <ligand>
        <name>Ca(2+)</name>
        <dbReference type="ChEBI" id="CHEBI:29108"/>
    </ligand>
</feature>
<feature type="binding site" evidence="13 14 15">
    <location>
        <position position="182"/>
    </location>
    <ligand>
        <name>Ca(2+)</name>
        <dbReference type="ChEBI" id="CHEBI:29108"/>
    </ligand>
</feature>
<feature type="binding site" evidence="13 14 15">
    <location>
        <position position="238"/>
    </location>
    <ligand>
        <name>Ca(2+)</name>
        <dbReference type="ChEBI" id="CHEBI:29108"/>
    </ligand>
</feature>
<feature type="binding site" evidence="5 14">
    <location>
        <position position="244"/>
    </location>
    <ligand>
        <name>beta-D-galactosyl-(1-&gt;3)-N-acetyl-D-glucosamine</name>
        <dbReference type="ChEBI" id="CHEBI:27707"/>
    </ligand>
</feature>
<feature type="binding site" evidence="5 14">
    <location>
        <position position="245"/>
    </location>
    <ligand>
        <name>beta-D-galactosyl-(1-&gt;3)-N-acetyl-D-glucosamine</name>
        <dbReference type="ChEBI" id="CHEBI:27707"/>
    </ligand>
</feature>
<feature type="binding site" evidence="5 14">
    <location>
        <position position="387"/>
    </location>
    <ligand>
        <name>beta-D-galactosyl-(1-&gt;3)-N-acetyl-D-glucosamine</name>
        <dbReference type="ChEBI" id="CHEBI:27707"/>
    </ligand>
</feature>
<feature type="binding site" evidence="5 14">
    <location>
        <position position="411"/>
    </location>
    <ligand>
        <name>beta-D-galactosyl-(1-&gt;3)-N-acetyl-D-glucosamine</name>
        <dbReference type="ChEBI" id="CHEBI:27707"/>
    </ligand>
</feature>
<feature type="binding site" evidence="5 14">
    <location>
        <position position="418"/>
    </location>
    <ligand>
        <name>beta-D-galactosyl-(1-&gt;3)-N-acetyl-D-glucosamine</name>
        <dbReference type="ChEBI" id="CHEBI:27707"/>
    </ligand>
</feature>
<feature type="binding site" evidence="5 14">
    <location>
        <position position="441"/>
    </location>
    <ligand>
        <name>beta-D-galactosyl-(1-&gt;3)-N-acetyl-D-glucosamine</name>
        <dbReference type="ChEBI" id="CHEBI:27707"/>
    </ligand>
</feature>
<feature type="mutagenesis site" description="Greatly reduced catalytic activity toward pNP-LNB." evidence="5">
    <original>K</original>
    <variation>A</variation>
    <location>
        <position position="244"/>
    </location>
</feature>
<feature type="mutagenesis site" description="Greatly reduced catalytic activity toward pNP-LNB." evidence="5">
    <original>W</original>
    <variation>A</variation>
    <location>
        <position position="387"/>
    </location>
</feature>
<feature type="mutagenesis site" description="Greatly reduced catalytic activity toward pNP-LNB." evidence="5">
    <original>D</original>
    <variation>A</variation>
    <variation>N</variation>
    <location>
        <position position="411"/>
    </location>
</feature>
<feature type="mutagenesis site" description="Greatly reduced catalytic activity toward pNP-LNB." evidence="5">
    <original>D</original>
    <variation>A</variation>
    <variation>N</variation>
    <location>
        <position position="418"/>
    </location>
</feature>
<feature type="mutagenesis site" description="Reduced catalytic activity toward pNP-LNB." evidence="5">
    <original>C</original>
    <variation>A</variation>
    <variation>S</variation>
    <location>
        <position position="441"/>
    </location>
</feature>
<evidence type="ECO:0000255" key="1"/>
<evidence type="ECO:0000255" key="2">
    <source>
        <dbReference type="PROSITE-ProRule" id="PRU00648"/>
    </source>
</evidence>
<evidence type="ECO:0000256" key="3">
    <source>
        <dbReference type="SAM" id="MobiDB-lite"/>
    </source>
</evidence>
<evidence type="ECO:0000269" key="4">
    <source>
    </source>
</evidence>
<evidence type="ECO:0000269" key="5">
    <source>
    </source>
</evidence>
<evidence type="ECO:0000303" key="6">
    <source>
    </source>
</evidence>
<evidence type="ECO:0000303" key="7">
    <source>
    </source>
</evidence>
<evidence type="ECO:0000305" key="8"/>
<evidence type="ECO:0000305" key="9">
    <source>
    </source>
</evidence>
<evidence type="ECO:0000305" key="10">
    <source>
    </source>
</evidence>
<evidence type="ECO:0000312" key="11">
    <source>
        <dbReference type="EMBL" id="BAJ67172.1"/>
    </source>
</evidence>
<evidence type="ECO:0000312" key="12">
    <source>
        <dbReference type="EMBL" id="BK008766"/>
    </source>
</evidence>
<evidence type="ECO:0007744" key="13">
    <source>
        <dbReference type="PDB" id="5GQC"/>
    </source>
</evidence>
<evidence type="ECO:0007744" key="14">
    <source>
        <dbReference type="PDB" id="5GQF"/>
    </source>
</evidence>
<evidence type="ECO:0007744" key="15">
    <source>
        <dbReference type="PDB" id="5GQG"/>
    </source>
</evidence>
<keyword id="KW-0002">3D-structure</keyword>
<keyword id="KW-0106">Calcium</keyword>
<keyword id="KW-0119">Carbohydrate metabolism</keyword>
<keyword id="KW-1003">Cell membrane</keyword>
<keyword id="KW-0326">Glycosidase</keyword>
<keyword id="KW-0378">Hydrolase</keyword>
<keyword id="KW-0472">Membrane</keyword>
<keyword id="KW-0479">Metal-binding</keyword>
<keyword id="KW-0624">Polysaccharide degradation</keyword>
<keyword id="KW-0677">Repeat</keyword>
<keyword id="KW-0732">Signal</keyword>
<keyword id="KW-0812">Transmembrane</keyword>
<keyword id="KW-1133">Transmembrane helix</keyword>
<accession>P0DW93</accession>
<name>LNBX_BIFL2</name>
<protein>
    <recommendedName>
        <fullName evidence="6 7">Lacto-N-biosidase</fullName>
        <shortName evidence="6">LNBase</shortName>
        <ecNumber evidence="4">3.2.1.140</ecNumber>
    </recommendedName>
</protein>
<dbReference type="EC" id="3.2.1.140" evidence="4"/>
<dbReference type="EMBL" id="BK008766">
    <property type="status" value="NOT_ANNOTATED_CDS"/>
    <property type="molecule type" value="Genomic_DNA"/>
</dbReference>
<dbReference type="EMBL" id="AP010888">
    <property type="protein sequence ID" value="BAJ67172.1"/>
    <property type="molecule type" value="Genomic_DNA"/>
</dbReference>
<dbReference type="RefSeq" id="WP_013582888.1">
    <property type="nucleotide sequence ID" value="NC_015067.1"/>
</dbReference>
<dbReference type="PDB" id="5GQC">
    <property type="method" value="X-ray"/>
    <property type="resolution" value="2.36 A"/>
    <property type="chains" value="A/B/C/D/E/F/G/H=31-625"/>
</dbReference>
<dbReference type="PDB" id="5GQF">
    <property type="method" value="X-ray"/>
    <property type="resolution" value="1.82 A"/>
    <property type="chains" value="A/B=31-625"/>
</dbReference>
<dbReference type="PDB" id="5GQG">
    <property type="method" value="X-ray"/>
    <property type="resolution" value="2.70 A"/>
    <property type="chains" value="A/B=31-625"/>
</dbReference>
<dbReference type="PDBsum" id="5GQC"/>
<dbReference type="PDBsum" id="5GQF"/>
<dbReference type="PDBsum" id="5GQG"/>
<dbReference type="SMR" id="P0DW93"/>
<dbReference type="GeneID" id="69579156"/>
<dbReference type="KEGG" id="blm:BLLJ_1505"/>
<dbReference type="SABIO-RK" id="P0DW93"/>
<dbReference type="GO" id="GO:0005886">
    <property type="term" value="C:plasma membrane"/>
    <property type="evidence" value="ECO:0007669"/>
    <property type="project" value="UniProtKB-SubCell"/>
</dbReference>
<dbReference type="GO" id="GO:0016798">
    <property type="term" value="F:hydrolase activity, acting on glycosyl bonds"/>
    <property type="evidence" value="ECO:0007669"/>
    <property type="project" value="UniProtKB-KW"/>
</dbReference>
<dbReference type="GO" id="GO:0046872">
    <property type="term" value="F:metal ion binding"/>
    <property type="evidence" value="ECO:0007669"/>
    <property type="project" value="UniProtKB-KW"/>
</dbReference>
<dbReference type="GO" id="GO:0000272">
    <property type="term" value="P:polysaccharide catabolic process"/>
    <property type="evidence" value="ECO:0007669"/>
    <property type="project" value="UniProtKB-KW"/>
</dbReference>
<dbReference type="Gene3D" id="1.20.1270.90">
    <property type="entry name" value="AF1782-like"/>
    <property type="match status" value="1"/>
</dbReference>
<dbReference type="Gene3D" id="2.160.20.10">
    <property type="entry name" value="Single-stranded right-handed beta-helix, Pectin lyase-like"/>
    <property type="match status" value="1"/>
</dbReference>
<dbReference type="InterPro" id="IPR006626">
    <property type="entry name" value="PbH1"/>
</dbReference>
<dbReference type="InterPro" id="IPR012334">
    <property type="entry name" value="Pectin_lyas_fold"/>
</dbReference>
<dbReference type="InterPro" id="IPR011050">
    <property type="entry name" value="Pectin_lyase_fold/virulence"/>
</dbReference>
<dbReference type="InterPro" id="IPR044055">
    <property type="entry name" value="RibLong"/>
</dbReference>
<dbReference type="InterPro" id="IPR006311">
    <property type="entry name" value="TAT_signal"/>
</dbReference>
<dbReference type="NCBIfam" id="NF038186">
    <property type="entry name" value="YPDG_rpt"/>
    <property type="match status" value="2"/>
</dbReference>
<dbReference type="Pfam" id="PF07554">
    <property type="entry name" value="FIVAR"/>
    <property type="match status" value="1"/>
</dbReference>
<dbReference type="Pfam" id="PF18957">
    <property type="entry name" value="RibLong"/>
    <property type="match status" value="2"/>
</dbReference>
<dbReference type="SMART" id="SM00710">
    <property type="entry name" value="PbH1"/>
    <property type="match status" value="7"/>
</dbReference>
<dbReference type="SUPFAM" id="SSF51126">
    <property type="entry name" value="Pectin lyase-like"/>
    <property type="match status" value="1"/>
</dbReference>
<dbReference type="PROSITE" id="PS51318">
    <property type="entry name" value="TAT"/>
    <property type="match status" value="1"/>
</dbReference>
<reference key="1">
    <citation type="journal article" date="2013" name="J. Biol. Chem.">
        <title>Lacto-N-biosidase encoded by a novel gene of Bifidobacterium longum subspecies longum shows unique substrate specificity and requires a designated chaperone for its active expression.</title>
        <authorList>
            <person name="Sakurama H."/>
            <person name="Kiyohara M."/>
            <person name="Wada J."/>
            <person name="Honda Y."/>
            <person name="Yamaguchi M."/>
            <person name="Fukiya S."/>
            <person name="Yokota A."/>
            <person name="Ashida H."/>
            <person name="Kumagai H."/>
            <person name="Kitaoka M."/>
            <person name="Yamamoto K."/>
            <person name="Katayama T."/>
        </authorList>
    </citation>
    <scope>NUCLEOTIDE SEQUENCE [GENOMIC DNA]</scope>
    <scope>FUNCTION</scope>
    <scope>CATALYTIC ACTIVITY</scope>
    <scope>BIOPHYSICOCHEMICAL PROPERTIES</scope>
    <scope>COFACTOR</scope>
    <scope>SUBSTRATE SPECIFICITY</scope>
    <scope>SUBUNIT</scope>
    <scope>SUBCELLULAR LOCATION</scope>
    <scope>ACTIVITY REGULATION</scope>
    <source>
        <strain>ATCC 15707 / DSM 20219 / CCUG 28903 / JCM 1217 / NCIMB 702259 / NCTC 11818 / E194b</strain>
    </source>
</reference>
<reference key="2">
    <citation type="journal article" date="2011" name="Nature">
        <title>Bifidobacteria can protect from enteropathogenic infection through production of acetate.</title>
        <authorList>
            <person name="Fukuda S."/>
            <person name="Toh H."/>
            <person name="Hase K."/>
            <person name="Oshima K."/>
            <person name="Nakanishi Y."/>
            <person name="Yoshimura K."/>
            <person name="Tobe T."/>
            <person name="Clarke J.M."/>
            <person name="Topping D.L."/>
            <person name="Suzuki T."/>
            <person name="Taylor T.D."/>
            <person name="Itoh K."/>
            <person name="Kikuchi J."/>
            <person name="Morita H."/>
            <person name="Hattori M."/>
            <person name="Ohno H."/>
        </authorList>
    </citation>
    <scope>NUCLEOTIDE SEQUENCE [LARGE SCALE GENOMIC DNA]</scope>
    <source>
        <strain>ATCC 15707 / DSM 20219 / CCUG 28903 / JCM 1217 / NCIMB 702259 / NCTC 11818 / E194b</strain>
    </source>
</reference>
<reference evidence="13 14 15" key="3">
    <citation type="journal article" date="2017" name="Cell Chem. Biol.">
        <title>Molecular Insight into Evolution of Symbiosis between Breast-Fed Infants and a Member of the Human Gut Microbiome Bifidobacterium longum.</title>
        <authorList>
            <person name="Yamada C."/>
            <person name="Gotoh A."/>
            <person name="Sakanaka M."/>
            <person name="Hattie M."/>
            <person name="Stubbs K.A."/>
            <person name="Katayama-Ikegami A."/>
            <person name="Hirose J."/>
            <person name="Kurihara S."/>
            <person name="Arakawa T."/>
            <person name="Kitaoka M."/>
            <person name="Okuda S."/>
            <person name="Katayama T."/>
            <person name="Fushinobu S."/>
        </authorList>
    </citation>
    <scope>X-RAY CRYSTALLOGRAPHY (1.82 ANGSTROMS) OF 31-625 IN COMPLEXES WITH CALCIUM; LACTO-N-BIOSE AND GALACTO-N-BIOSE</scope>
    <scope>FUNCTION</scope>
    <scope>REACTION MECHANISM</scope>
    <scope>ACTIVE SITE</scope>
    <scope>ACTIVITY REGULATION</scope>
    <scope>DOMAIN</scope>
    <scope>MUTAGENESIS OF LYS-244; TRP-387; ASP-411; ASP-418 AND CYS-441</scope>
    <scope>DISRUPTION PHENOTYPE</scope>
</reference>
<gene>
    <name evidence="6 7 12" type="primary">lnbX</name>
    <name evidence="11" type="ordered locus">BLLJ_1505</name>
</gene>
<comment type="function">
    <text evidence="4 5">Present in the infant gut, this enzyme is involved in the assimilation of type-1 human milk oligosaccharides (HMOs) (PubMed:23843461, PubMed:28392148). It hydrolyzes via a retaining mechanism the beta-D-GlcNAc-(1-&gt;3)-beta-D-Gal linkage in lacto-N-tetraose (LNT or beta-D-Gal-(1-&gt;3)-beta-D-GlcNAc-(1-&gt;3)-beta-D-Gal-(1-&gt;4)-D-Glc), an abundant HMO unique to human breast milk, releasing lacto-N-biose (LNB or beta-D-Gal-(1-&gt;3)-D-GlcNAc) and lactose. With a much lower efficiency, is also able to cleave the same linkage in lacto-N-fucopentaose I (alpha-Fuc(1-&gt;2)-beta-D-Gal-(1-&gt;3)-beta-D-GlcNAc(1-&gt;3)-beta-D-Gal-(1-&gt;4)-D-Glc), and sialyllacto-N-tetraose a (alpha-Neu5Ac-(2-&gt;3)-beta-D-Gal-(1-&gt;3)-beta-D-GlcNAc-(1-&gt;3)-beta-D-Gal-(1-&gt;4)-D-Glc) (PubMed:23843461). Is a key enzymatic factor for growth and proliferation of B.longum in the gut ecosystem of breast-fed infants (PubMed:28392148).</text>
</comment>
<comment type="catalytic activity">
    <reaction evidence="4">
        <text>beta-D-Gal-(1-&gt;3)-beta-D-GlcNAc-(1-&gt;3)-beta-D-Gal-(1-&gt;4)-D-Glc + H2O = beta-D-galactosyl-(1-&gt;3)-N-acetyl-D-glucosamine + lactose</text>
        <dbReference type="Rhea" id="RHEA:21568"/>
        <dbReference type="ChEBI" id="CHEBI:15377"/>
        <dbReference type="ChEBI" id="CHEBI:17716"/>
        <dbReference type="ChEBI" id="CHEBI:27707"/>
        <dbReference type="ChEBI" id="CHEBI:30248"/>
        <dbReference type="EC" id="3.2.1.140"/>
    </reaction>
    <physiologicalReaction direction="left-to-right" evidence="9">
        <dbReference type="Rhea" id="RHEA:21569"/>
    </physiologicalReaction>
</comment>
<comment type="cofactor">
    <cofactor evidence="4">
        <name>Ca(2+)</name>
        <dbReference type="ChEBI" id="CHEBI:29108"/>
    </cofactor>
    <text evidence="4">Binds 3 Ca(2+) ions per subunit. Calcium ions are required for efficient protein folding.</text>
</comment>
<comment type="cofactor">
    <cofactor evidence="4">
        <name>Mg(2+)</name>
        <dbReference type="ChEBI" id="CHEBI:18420"/>
    </cofactor>
    <text evidence="4">Binds 1 Mg(2+) ion per subunit. Magnesium ions are required for efficient protein folding.</text>
</comment>
<comment type="activity regulation">
    <text evidence="4 5">Requires the chaperone LnbY for its proper folding and active expression (PubMed:23843461). Is potently and competitively inhibited by LNB-PUGNAc and LNB-NHAcDNJ in vitro (PubMed:28392148).</text>
</comment>
<comment type="biophysicochemical properties">
    <kinetics>
        <KM evidence="4">401 uM for lacto-N-tetraose (beta-D-Gal-(1-&gt;3)-beta-D-GlcNAc-(1-&gt;3)-beta-D-Gal-(1-&gt;4)-D-Glc)</KM>
        <KM evidence="4">119 uM for chromogenic LNB-beta-pNP (beta-D-Gal-(1-&gt;3)-beta-D-GlcNAc-pNP)</KM>
        <KM evidence="4">186 uM for chromogenic beta-D-GalNAc-(1-&gt;3)-beta-D-GlcNAc-pNP</KM>
        <KM evidence="4">14.6 mM for lacto-N-fucopentaose I (alpha-Fuc(1-&gt;2)-beta-D-Gal-(1-&gt;3)-beta-D-GlcNAc(1-&gt;3)-beta-D-Gal-(1-&gt;4)-D-Glc)</KM>
        <text>kcat is 113 sec(-1) with lacto-N-tetraose (beta-D-Gal-(1-&gt;3)-beta-D-GlcNAc-(1-&gt;3)-beta-D-Gal-(1-&gt;4)-D-Glc) as substrate. kcat is 96.1 sec(-1) with LNB-beta-pNP (beta-D-Gal-(1-&gt;3)-beta-D-GlcNAc-pNP) as chromogenic substrate. kcat is 39.4 sec(-1) with beta-D-GalNAc-(1-&gt;3)-beta-D-GlcNAc-pNP as chromogenic substrate. kcat is 13.5 sec(-1) with lacto-N-fucopentaose I (alpha-Fuc(1-&gt;2)-beta-D-Gal-(1-&gt;3)-beta-D-GlcNAc(1-&gt;3)-beta-D-Gal-(1-&gt;4)-D-Glc) as substrate.</text>
    </kinetics>
    <phDependence>
        <text evidence="4">Optimum pH is 5.4 with LNB-beta-pNP (beta-D-Gal-(1-&gt;3)-beta-D-GlcNAc-pNP) as chromogenic substrate.</text>
    </phDependence>
    <temperatureDependence>
        <text evidence="4">Optimum temperature is 60 degrees Celsius with LNB-beta-pNP (beta-D-Gal-(1-&gt;3)-beta-D-GlcNAc-pNP) as chromogenic substrate.</text>
    </temperatureDependence>
</comment>
<comment type="subunit">
    <text evidence="4">Homodimer.</text>
</comment>
<comment type="subcellular location">
    <subcellularLocation>
        <location evidence="1">Cell membrane</location>
        <topology evidence="1">Single-pass membrane protein</topology>
        <orientation evidence="9">Extracellular side</orientation>
    </subcellularLocation>
</comment>
<comment type="domain">
    <text evidence="5">The region of amino acids 31-625 was identified as the minimum catalytic unit exhibiting full activity.</text>
</comment>
<comment type="PTM">
    <text evidence="2">Predicted to be exported by the Tat system. The position of the signal peptide cleavage has not been experimentally proven.</text>
</comment>
<comment type="disruption phenotype">
    <text evidence="5">Cells lacking this gene lose the ability to grow on LNT but continue to grow well on lactose and LNB.</text>
</comment>
<comment type="miscellaneous">
    <text evidence="5">Breast-fed infants have gut microbiota that are substantially more rich in bifidobacteria compared with the mix-fed infants. Notably, B.longum was found to significantly dominate among members of the genus Bifidobacterium in the breast-fed infants.</text>
</comment>
<comment type="miscellaneous">
    <text evidence="8">HMOs function as prebiotics, promoting the growth of bifidobacteria in the gastrointestinal tracts of breast-fed infants, which in turn promotes optimal health.</text>
</comment>
<comment type="similarity">
    <text evidence="10">Belongs to the glycosyl hydrolase 136 (GH136) family.</text>
</comment>
<organism>
    <name type="scientific">Bifidobacterium longum subsp. longum (strain ATCC 15707 / DSM 20219 / JCM 1217 / NCTC 11818 / E194b)</name>
    <dbReference type="NCBI Taxonomy" id="565042"/>
    <lineage>
        <taxon>Bacteria</taxon>
        <taxon>Bacillati</taxon>
        <taxon>Actinomycetota</taxon>
        <taxon>Actinomycetes</taxon>
        <taxon>Bifidobacteriales</taxon>
        <taxon>Bifidobacteriaceae</taxon>
        <taxon>Bifidobacterium</taxon>
    </lineage>
</organism>